<reference key="1">
    <citation type="journal article" date="2005" name="Genome Res.">
        <title>Living with two extremes: conclusions from the genome sequence of Natronomonas pharaonis.</title>
        <authorList>
            <person name="Falb M."/>
            <person name="Pfeiffer F."/>
            <person name="Palm P."/>
            <person name="Rodewald K."/>
            <person name="Hickmann V."/>
            <person name="Tittor J."/>
            <person name="Oesterhelt D."/>
        </authorList>
    </citation>
    <scope>NUCLEOTIDE SEQUENCE [LARGE SCALE GENOMIC DNA]</scope>
    <source>
        <strain>ATCC 35678 / DSM 2160 / CIP 103997 / JCM 8858 / NBRC 14720 / NCIMB 2260 / Gabara</strain>
    </source>
</reference>
<dbReference type="EMBL" id="CR936257">
    <property type="protein sequence ID" value="CAI48153.1"/>
    <property type="molecule type" value="Genomic_DNA"/>
</dbReference>
<dbReference type="RefSeq" id="WP_011321792.1">
    <property type="nucleotide sequence ID" value="NC_007426.1"/>
</dbReference>
<dbReference type="SMR" id="Q3IUM7"/>
<dbReference type="STRING" id="348780.NP_0124A"/>
<dbReference type="EnsemblBacteria" id="CAI48153">
    <property type="protein sequence ID" value="CAI48153"/>
    <property type="gene ID" value="NP_0124A"/>
</dbReference>
<dbReference type="GeneID" id="3703186"/>
<dbReference type="KEGG" id="nph:NP_0124A"/>
<dbReference type="eggNOG" id="arCOG04254">
    <property type="taxonomic scope" value="Archaea"/>
</dbReference>
<dbReference type="HOGENOM" id="CLU_063975_0_0_2"/>
<dbReference type="OrthoDB" id="45346at2157"/>
<dbReference type="Proteomes" id="UP000002698">
    <property type="component" value="Chromosome"/>
</dbReference>
<dbReference type="GO" id="GO:0015935">
    <property type="term" value="C:small ribosomal subunit"/>
    <property type="evidence" value="ECO:0007669"/>
    <property type="project" value="InterPro"/>
</dbReference>
<dbReference type="GO" id="GO:0019843">
    <property type="term" value="F:rRNA binding"/>
    <property type="evidence" value="ECO:0007669"/>
    <property type="project" value="UniProtKB-UniRule"/>
</dbReference>
<dbReference type="GO" id="GO:0003735">
    <property type="term" value="F:structural constituent of ribosome"/>
    <property type="evidence" value="ECO:0007669"/>
    <property type="project" value="InterPro"/>
</dbReference>
<dbReference type="GO" id="GO:0006412">
    <property type="term" value="P:translation"/>
    <property type="evidence" value="ECO:0007669"/>
    <property type="project" value="UniProtKB-UniRule"/>
</dbReference>
<dbReference type="CDD" id="cd14867">
    <property type="entry name" value="uS7_Eukaryote"/>
    <property type="match status" value="1"/>
</dbReference>
<dbReference type="Gene3D" id="1.10.455.10">
    <property type="entry name" value="Ribosomal protein S7 domain"/>
    <property type="match status" value="1"/>
</dbReference>
<dbReference type="HAMAP" id="MF_00480_A">
    <property type="entry name" value="Ribosomal_uS7_A"/>
    <property type="match status" value="1"/>
</dbReference>
<dbReference type="InterPro" id="IPR000235">
    <property type="entry name" value="Ribosomal_uS7"/>
</dbReference>
<dbReference type="InterPro" id="IPR026018">
    <property type="entry name" value="Ribosomal_uS7_arc"/>
</dbReference>
<dbReference type="InterPro" id="IPR020606">
    <property type="entry name" value="Ribosomal_uS7_CS"/>
</dbReference>
<dbReference type="InterPro" id="IPR023798">
    <property type="entry name" value="Ribosomal_uS7_dom"/>
</dbReference>
<dbReference type="InterPro" id="IPR036823">
    <property type="entry name" value="Ribosomal_uS7_dom_sf"/>
</dbReference>
<dbReference type="InterPro" id="IPR005716">
    <property type="entry name" value="Ribosomal_uS7_euk/arc"/>
</dbReference>
<dbReference type="NCBIfam" id="NF003106">
    <property type="entry name" value="PRK04027.1"/>
    <property type="match status" value="1"/>
</dbReference>
<dbReference type="NCBIfam" id="TIGR01028">
    <property type="entry name" value="uS7_euk_arch"/>
    <property type="match status" value="1"/>
</dbReference>
<dbReference type="PANTHER" id="PTHR11205">
    <property type="entry name" value="RIBOSOMAL PROTEIN S7"/>
    <property type="match status" value="1"/>
</dbReference>
<dbReference type="Pfam" id="PF00177">
    <property type="entry name" value="Ribosomal_S7"/>
    <property type="match status" value="1"/>
</dbReference>
<dbReference type="PIRSF" id="PIRSF002122">
    <property type="entry name" value="RPS7p_RPS7a_RPS5e_RPS7o"/>
    <property type="match status" value="1"/>
</dbReference>
<dbReference type="SUPFAM" id="SSF47973">
    <property type="entry name" value="Ribosomal protein S7"/>
    <property type="match status" value="1"/>
</dbReference>
<dbReference type="PROSITE" id="PS00052">
    <property type="entry name" value="RIBOSOMAL_S7"/>
    <property type="match status" value="1"/>
</dbReference>
<sequence>MSSEAPEPDAPASTDDERVSAQLFGEWEIGEIEYDDPSTRRYITVTPIAHTMGRHSEKQFKKSEISIVERLINRLMQTDENTGKKQQATKIVREAFDIVAERTDENPVQVLVTAVENAGPREETVRLKYGGISVPKAVDVAPQRRVDLALKFIAEGTYNDSFKTTTPVEEALAHQLIGAANYDLQAYPVSQKEEQERVAAAAR</sequence>
<gene>
    <name evidence="1" type="primary">rps7</name>
    <name type="ordered locus">NP_0124A</name>
</gene>
<name>RS7_NATPD</name>
<evidence type="ECO:0000255" key="1">
    <source>
        <dbReference type="HAMAP-Rule" id="MF_00480"/>
    </source>
</evidence>
<evidence type="ECO:0000256" key="2">
    <source>
        <dbReference type="SAM" id="MobiDB-lite"/>
    </source>
</evidence>
<evidence type="ECO:0000305" key="3"/>
<feature type="chain" id="PRO_0000226543" description="Small ribosomal subunit protein uS7">
    <location>
        <begin position="1"/>
        <end position="203"/>
    </location>
</feature>
<feature type="region of interest" description="Disordered" evidence="2">
    <location>
        <begin position="1"/>
        <end position="21"/>
    </location>
</feature>
<accession>Q3IUM7</accession>
<keyword id="KW-1185">Reference proteome</keyword>
<keyword id="KW-0687">Ribonucleoprotein</keyword>
<keyword id="KW-0689">Ribosomal protein</keyword>
<keyword id="KW-0694">RNA-binding</keyword>
<keyword id="KW-0699">rRNA-binding</keyword>
<protein>
    <recommendedName>
        <fullName evidence="1">Small ribosomal subunit protein uS7</fullName>
    </recommendedName>
    <alternativeName>
        <fullName evidence="3">30S ribosomal protein S7</fullName>
    </alternativeName>
</protein>
<comment type="function">
    <text evidence="1">One of the primary rRNA binding proteins, it binds directly to 16S rRNA where it nucleates assembly of the head domain of the 30S subunit. Is located at the subunit interface close to the decoding center.</text>
</comment>
<comment type="subunit">
    <text evidence="1">Part of the 30S ribosomal subunit.</text>
</comment>
<comment type="similarity">
    <text evidence="1">Belongs to the universal ribosomal protein uS7 family.</text>
</comment>
<proteinExistence type="inferred from homology"/>
<organism>
    <name type="scientific">Natronomonas pharaonis (strain ATCC 35678 / DSM 2160 / CIP 103997 / JCM 8858 / NBRC 14720 / NCIMB 2260 / Gabara)</name>
    <name type="common">Halobacterium pharaonis</name>
    <dbReference type="NCBI Taxonomy" id="348780"/>
    <lineage>
        <taxon>Archaea</taxon>
        <taxon>Methanobacteriati</taxon>
        <taxon>Methanobacteriota</taxon>
        <taxon>Stenosarchaea group</taxon>
        <taxon>Halobacteria</taxon>
        <taxon>Halobacteriales</taxon>
        <taxon>Haloarculaceae</taxon>
        <taxon>Natronomonas</taxon>
    </lineage>
</organism>